<protein>
    <recommendedName>
        <fullName evidence="1">tRNA (guanine-N(1)-)-methyltransferase</fullName>
        <ecNumber evidence="1">2.1.1.228</ecNumber>
    </recommendedName>
    <alternativeName>
        <fullName evidence="1">M1G-methyltransferase</fullName>
    </alternativeName>
    <alternativeName>
        <fullName evidence="1">tRNA [GM37] methyltransferase</fullName>
    </alternativeName>
</protein>
<organism>
    <name type="scientific">Pediococcus pentosaceus (strain ATCC 25745 / CCUG 21536 / LMG 10740 / 183-1w)</name>
    <dbReference type="NCBI Taxonomy" id="278197"/>
    <lineage>
        <taxon>Bacteria</taxon>
        <taxon>Bacillati</taxon>
        <taxon>Bacillota</taxon>
        <taxon>Bacilli</taxon>
        <taxon>Lactobacillales</taxon>
        <taxon>Lactobacillaceae</taxon>
        <taxon>Pediococcus</taxon>
    </lineage>
</organism>
<evidence type="ECO:0000255" key="1">
    <source>
        <dbReference type="HAMAP-Rule" id="MF_00605"/>
    </source>
</evidence>
<keyword id="KW-0963">Cytoplasm</keyword>
<keyword id="KW-0489">Methyltransferase</keyword>
<keyword id="KW-0949">S-adenosyl-L-methionine</keyword>
<keyword id="KW-0808">Transferase</keyword>
<keyword id="KW-0819">tRNA processing</keyword>
<reference key="1">
    <citation type="journal article" date="2006" name="Proc. Natl. Acad. Sci. U.S.A.">
        <title>Comparative genomics of the lactic acid bacteria.</title>
        <authorList>
            <person name="Makarova K.S."/>
            <person name="Slesarev A."/>
            <person name="Wolf Y.I."/>
            <person name="Sorokin A."/>
            <person name="Mirkin B."/>
            <person name="Koonin E.V."/>
            <person name="Pavlov A."/>
            <person name="Pavlova N."/>
            <person name="Karamychev V."/>
            <person name="Polouchine N."/>
            <person name="Shakhova V."/>
            <person name="Grigoriev I."/>
            <person name="Lou Y."/>
            <person name="Rohksar D."/>
            <person name="Lucas S."/>
            <person name="Huang K."/>
            <person name="Goodstein D.M."/>
            <person name="Hawkins T."/>
            <person name="Plengvidhya V."/>
            <person name="Welker D."/>
            <person name="Hughes J."/>
            <person name="Goh Y."/>
            <person name="Benson A."/>
            <person name="Baldwin K."/>
            <person name="Lee J.-H."/>
            <person name="Diaz-Muniz I."/>
            <person name="Dosti B."/>
            <person name="Smeianov V."/>
            <person name="Wechter W."/>
            <person name="Barabote R."/>
            <person name="Lorca G."/>
            <person name="Altermann E."/>
            <person name="Barrangou R."/>
            <person name="Ganesan B."/>
            <person name="Xie Y."/>
            <person name="Rawsthorne H."/>
            <person name="Tamir D."/>
            <person name="Parker C."/>
            <person name="Breidt F."/>
            <person name="Broadbent J.R."/>
            <person name="Hutkins R."/>
            <person name="O'Sullivan D."/>
            <person name="Steele J."/>
            <person name="Unlu G."/>
            <person name="Saier M.H. Jr."/>
            <person name="Klaenhammer T."/>
            <person name="Richardson P."/>
            <person name="Kozyavkin S."/>
            <person name="Weimer B.C."/>
            <person name="Mills D.A."/>
        </authorList>
    </citation>
    <scope>NUCLEOTIDE SEQUENCE [LARGE SCALE GENOMIC DNA]</scope>
    <source>
        <strain>ATCC 25745 / CCUG 21536 / LMG 10740 / 183-1w</strain>
    </source>
</reference>
<dbReference type="EC" id="2.1.1.228" evidence="1"/>
<dbReference type="EMBL" id="CP000422">
    <property type="protein sequence ID" value="ABJ67909.1"/>
    <property type="molecule type" value="Genomic_DNA"/>
</dbReference>
<dbReference type="RefSeq" id="WP_011673299.1">
    <property type="nucleotide sequence ID" value="NC_008525.1"/>
</dbReference>
<dbReference type="SMR" id="Q03FW3"/>
<dbReference type="STRING" id="278197.PEPE_0849"/>
<dbReference type="GeneID" id="33062494"/>
<dbReference type="KEGG" id="ppe:PEPE_0849"/>
<dbReference type="eggNOG" id="COG0336">
    <property type="taxonomic scope" value="Bacteria"/>
</dbReference>
<dbReference type="HOGENOM" id="CLU_047363_0_1_9"/>
<dbReference type="OrthoDB" id="9807416at2"/>
<dbReference type="Proteomes" id="UP000000773">
    <property type="component" value="Chromosome"/>
</dbReference>
<dbReference type="GO" id="GO:0005829">
    <property type="term" value="C:cytosol"/>
    <property type="evidence" value="ECO:0007669"/>
    <property type="project" value="TreeGrafter"/>
</dbReference>
<dbReference type="GO" id="GO:0052906">
    <property type="term" value="F:tRNA (guanine(37)-N1)-methyltransferase activity"/>
    <property type="evidence" value="ECO:0007669"/>
    <property type="project" value="UniProtKB-UniRule"/>
</dbReference>
<dbReference type="GO" id="GO:0002939">
    <property type="term" value="P:tRNA N1-guanine methylation"/>
    <property type="evidence" value="ECO:0007669"/>
    <property type="project" value="TreeGrafter"/>
</dbReference>
<dbReference type="CDD" id="cd18080">
    <property type="entry name" value="TrmD-like"/>
    <property type="match status" value="1"/>
</dbReference>
<dbReference type="FunFam" id="1.10.1270.20:FF:000001">
    <property type="entry name" value="tRNA (guanine-N(1)-)-methyltransferase"/>
    <property type="match status" value="1"/>
</dbReference>
<dbReference type="FunFam" id="3.40.1280.10:FF:000001">
    <property type="entry name" value="tRNA (guanine-N(1)-)-methyltransferase"/>
    <property type="match status" value="1"/>
</dbReference>
<dbReference type="Gene3D" id="3.40.1280.10">
    <property type="match status" value="1"/>
</dbReference>
<dbReference type="Gene3D" id="1.10.1270.20">
    <property type="entry name" value="tRNA(m1g37)methyltransferase, domain 2"/>
    <property type="match status" value="1"/>
</dbReference>
<dbReference type="HAMAP" id="MF_00605">
    <property type="entry name" value="TrmD"/>
    <property type="match status" value="1"/>
</dbReference>
<dbReference type="InterPro" id="IPR029028">
    <property type="entry name" value="Alpha/beta_knot_MTases"/>
</dbReference>
<dbReference type="InterPro" id="IPR023148">
    <property type="entry name" value="tRNA_m1G_MeTrfase_C_sf"/>
</dbReference>
<dbReference type="InterPro" id="IPR002649">
    <property type="entry name" value="tRNA_m1G_MeTrfase_TrmD"/>
</dbReference>
<dbReference type="InterPro" id="IPR029026">
    <property type="entry name" value="tRNA_m1G_MTases_N"/>
</dbReference>
<dbReference type="InterPro" id="IPR016009">
    <property type="entry name" value="tRNA_MeTrfase_TRMD/TRM10"/>
</dbReference>
<dbReference type="NCBIfam" id="NF000648">
    <property type="entry name" value="PRK00026.1"/>
    <property type="match status" value="1"/>
</dbReference>
<dbReference type="NCBIfam" id="TIGR00088">
    <property type="entry name" value="trmD"/>
    <property type="match status" value="1"/>
</dbReference>
<dbReference type="PANTHER" id="PTHR46417">
    <property type="entry name" value="TRNA (GUANINE-N(1)-)-METHYLTRANSFERASE"/>
    <property type="match status" value="1"/>
</dbReference>
<dbReference type="PANTHER" id="PTHR46417:SF1">
    <property type="entry name" value="TRNA (GUANINE-N(1)-)-METHYLTRANSFERASE"/>
    <property type="match status" value="1"/>
</dbReference>
<dbReference type="Pfam" id="PF01746">
    <property type="entry name" value="tRNA_m1G_MT"/>
    <property type="match status" value="1"/>
</dbReference>
<dbReference type="PIRSF" id="PIRSF000386">
    <property type="entry name" value="tRNA_mtase"/>
    <property type="match status" value="1"/>
</dbReference>
<dbReference type="SUPFAM" id="SSF75217">
    <property type="entry name" value="alpha/beta knot"/>
    <property type="match status" value="1"/>
</dbReference>
<feature type="chain" id="PRO_1000006502" description="tRNA (guanine-N(1)-)-methyltransferase">
    <location>
        <begin position="1"/>
        <end position="245"/>
    </location>
</feature>
<feature type="binding site" evidence="1">
    <location>
        <position position="114"/>
    </location>
    <ligand>
        <name>S-adenosyl-L-methionine</name>
        <dbReference type="ChEBI" id="CHEBI:59789"/>
    </ligand>
</feature>
<feature type="binding site" evidence="1">
    <location>
        <begin position="133"/>
        <end position="138"/>
    </location>
    <ligand>
        <name>S-adenosyl-L-methionine</name>
        <dbReference type="ChEBI" id="CHEBI:59789"/>
    </ligand>
</feature>
<name>TRMD_PEDPA</name>
<gene>
    <name evidence="1" type="primary">trmD</name>
    <name type="ordered locus">PEPE_0849</name>
</gene>
<proteinExistence type="inferred from homology"/>
<sequence length="245" mass="27319">MKIDVLTLFPKMVEVPLHESIVGKAIEAGKLNVDVTDFRQYSTNKHGNVDDYPYGGGAGMLLTPQPIFDAMEHVKSQNNQSTGRVILVDPGGKQFNQTMAEDFAKEEHLTFICGHYEGYDERIKTLVDDEVSLGDFVITGGELAALTMIDATVRLLPDILGNKDSAVDDSFSTGLLEFPQYTRPEDFRGLKVPSILLSGNHGKIDEWRRTESLKKTLARRPDLLETAQLTPEDKQILRELQTPDL</sequence>
<comment type="function">
    <text evidence="1">Specifically methylates guanosine-37 in various tRNAs.</text>
</comment>
<comment type="catalytic activity">
    <reaction evidence="1">
        <text>guanosine(37) in tRNA + S-adenosyl-L-methionine = N(1)-methylguanosine(37) in tRNA + S-adenosyl-L-homocysteine + H(+)</text>
        <dbReference type="Rhea" id="RHEA:36899"/>
        <dbReference type="Rhea" id="RHEA-COMP:10145"/>
        <dbReference type="Rhea" id="RHEA-COMP:10147"/>
        <dbReference type="ChEBI" id="CHEBI:15378"/>
        <dbReference type="ChEBI" id="CHEBI:57856"/>
        <dbReference type="ChEBI" id="CHEBI:59789"/>
        <dbReference type="ChEBI" id="CHEBI:73542"/>
        <dbReference type="ChEBI" id="CHEBI:74269"/>
        <dbReference type="EC" id="2.1.1.228"/>
    </reaction>
</comment>
<comment type="subunit">
    <text evidence="1">Homodimer.</text>
</comment>
<comment type="subcellular location">
    <subcellularLocation>
        <location evidence="1">Cytoplasm</location>
    </subcellularLocation>
</comment>
<comment type="similarity">
    <text evidence="1">Belongs to the RNA methyltransferase TrmD family.</text>
</comment>
<accession>Q03FW3</accession>